<gene>
    <name evidence="1" type="primary">nuoK</name>
    <name type="ordered locus">Avin_28530</name>
</gene>
<organism>
    <name type="scientific">Azotobacter vinelandii (strain DJ / ATCC BAA-1303)</name>
    <dbReference type="NCBI Taxonomy" id="322710"/>
    <lineage>
        <taxon>Bacteria</taxon>
        <taxon>Pseudomonadati</taxon>
        <taxon>Pseudomonadota</taxon>
        <taxon>Gammaproteobacteria</taxon>
        <taxon>Pseudomonadales</taxon>
        <taxon>Pseudomonadaceae</taxon>
        <taxon>Azotobacter</taxon>
    </lineage>
</organism>
<name>NUOK_AZOVD</name>
<sequence>MNAIPMEHGLALSGVLFSLGLIGLMVRRNILFVLMSLEVMMNAAALAFVVAGSRWAQADGQIMFILVITLAAAEASIGLAILLQLHRRFHTLDIDAASEMRG</sequence>
<keyword id="KW-0997">Cell inner membrane</keyword>
<keyword id="KW-1003">Cell membrane</keyword>
<keyword id="KW-0472">Membrane</keyword>
<keyword id="KW-0520">NAD</keyword>
<keyword id="KW-0874">Quinone</keyword>
<keyword id="KW-1278">Translocase</keyword>
<keyword id="KW-0812">Transmembrane</keyword>
<keyword id="KW-1133">Transmembrane helix</keyword>
<keyword id="KW-0813">Transport</keyword>
<keyword id="KW-0830">Ubiquinone</keyword>
<evidence type="ECO:0000255" key="1">
    <source>
        <dbReference type="HAMAP-Rule" id="MF_01456"/>
    </source>
</evidence>
<dbReference type="EC" id="7.1.1.-" evidence="1"/>
<dbReference type="EMBL" id="CP001157">
    <property type="protein sequence ID" value="ACO79025.1"/>
    <property type="molecule type" value="Genomic_DNA"/>
</dbReference>
<dbReference type="RefSeq" id="WP_012701412.1">
    <property type="nucleotide sequence ID" value="NC_012560.1"/>
</dbReference>
<dbReference type="SMR" id="C1DL23"/>
<dbReference type="STRING" id="322710.Avin_28530"/>
<dbReference type="EnsemblBacteria" id="ACO79025">
    <property type="protein sequence ID" value="ACO79025"/>
    <property type="gene ID" value="Avin_28530"/>
</dbReference>
<dbReference type="GeneID" id="88185968"/>
<dbReference type="KEGG" id="avn:Avin_28530"/>
<dbReference type="eggNOG" id="COG0713">
    <property type="taxonomic scope" value="Bacteria"/>
</dbReference>
<dbReference type="HOGENOM" id="CLU_144724_0_1_6"/>
<dbReference type="OrthoDB" id="9801357at2"/>
<dbReference type="Proteomes" id="UP000002424">
    <property type="component" value="Chromosome"/>
</dbReference>
<dbReference type="GO" id="GO:0030964">
    <property type="term" value="C:NADH dehydrogenase complex"/>
    <property type="evidence" value="ECO:0007669"/>
    <property type="project" value="TreeGrafter"/>
</dbReference>
<dbReference type="GO" id="GO:0005886">
    <property type="term" value="C:plasma membrane"/>
    <property type="evidence" value="ECO:0007669"/>
    <property type="project" value="UniProtKB-SubCell"/>
</dbReference>
<dbReference type="GO" id="GO:0050136">
    <property type="term" value="F:NADH:ubiquinone reductase (non-electrogenic) activity"/>
    <property type="evidence" value="ECO:0007669"/>
    <property type="project" value="UniProtKB-UniRule"/>
</dbReference>
<dbReference type="GO" id="GO:0048038">
    <property type="term" value="F:quinone binding"/>
    <property type="evidence" value="ECO:0007669"/>
    <property type="project" value="UniProtKB-KW"/>
</dbReference>
<dbReference type="GO" id="GO:0042773">
    <property type="term" value="P:ATP synthesis coupled electron transport"/>
    <property type="evidence" value="ECO:0007669"/>
    <property type="project" value="InterPro"/>
</dbReference>
<dbReference type="FunFam" id="1.10.287.3510:FF:000001">
    <property type="entry name" value="NADH-quinone oxidoreductase subunit K"/>
    <property type="match status" value="1"/>
</dbReference>
<dbReference type="Gene3D" id="1.10.287.3510">
    <property type="match status" value="1"/>
</dbReference>
<dbReference type="HAMAP" id="MF_01456">
    <property type="entry name" value="NDH1_NuoK"/>
    <property type="match status" value="1"/>
</dbReference>
<dbReference type="InterPro" id="IPR001133">
    <property type="entry name" value="NADH_UbQ_OxRdtase_chain4L/K"/>
</dbReference>
<dbReference type="InterPro" id="IPR039428">
    <property type="entry name" value="NUOK/Mnh_C1-like"/>
</dbReference>
<dbReference type="NCBIfam" id="NF004319">
    <property type="entry name" value="PRK05715.1-1"/>
    <property type="match status" value="1"/>
</dbReference>
<dbReference type="NCBIfam" id="NF004320">
    <property type="entry name" value="PRK05715.1-2"/>
    <property type="match status" value="1"/>
</dbReference>
<dbReference type="PANTHER" id="PTHR11434:SF16">
    <property type="entry name" value="NADH-UBIQUINONE OXIDOREDUCTASE CHAIN 4L"/>
    <property type="match status" value="1"/>
</dbReference>
<dbReference type="PANTHER" id="PTHR11434">
    <property type="entry name" value="NADH-UBIQUINONE OXIDOREDUCTASE SUBUNIT ND4L"/>
    <property type="match status" value="1"/>
</dbReference>
<dbReference type="Pfam" id="PF00420">
    <property type="entry name" value="Oxidored_q2"/>
    <property type="match status" value="1"/>
</dbReference>
<comment type="function">
    <text evidence="1">NDH-1 shuttles electrons from NADH, via FMN and iron-sulfur (Fe-S) centers, to quinones in the respiratory chain. The immediate electron acceptor for the enzyme in this species is believed to be ubiquinone. Couples the redox reaction to proton translocation (for every two electrons transferred, four hydrogen ions are translocated across the cytoplasmic membrane), and thus conserves the redox energy in a proton gradient.</text>
</comment>
<comment type="catalytic activity">
    <reaction evidence="1">
        <text>a quinone + NADH + 5 H(+)(in) = a quinol + NAD(+) + 4 H(+)(out)</text>
        <dbReference type="Rhea" id="RHEA:57888"/>
        <dbReference type="ChEBI" id="CHEBI:15378"/>
        <dbReference type="ChEBI" id="CHEBI:24646"/>
        <dbReference type="ChEBI" id="CHEBI:57540"/>
        <dbReference type="ChEBI" id="CHEBI:57945"/>
        <dbReference type="ChEBI" id="CHEBI:132124"/>
    </reaction>
</comment>
<comment type="subunit">
    <text evidence="1">NDH-1 is composed of 13 different subunits. Subunits NuoA, H, J, K, L, M, N constitute the membrane sector of the complex.</text>
</comment>
<comment type="subcellular location">
    <subcellularLocation>
        <location evidence="1">Cell inner membrane</location>
        <topology evidence="1">Multi-pass membrane protein</topology>
    </subcellularLocation>
</comment>
<comment type="similarity">
    <text evidence="1">Belongs to the complex I subunit 4L family.</text>
</comment>
<accession>C1DL23</accession>
<protein>
    <recommendedName>
        <fullName evidence="1">NADH-quinone oxidoreductase subunit K</fullName>
        <ecNumber evidence="1">7.1.1.-</ecNumber>
    </recommendedName>
    <alternativeName>
        <fullName evidence="1">NADH dehydrogenase I subunit K</fullName>
    </alternativeName>
    <alternativeName>
        <fullName evidence="1">NDH-1 subunit K</fullName>
    </alternativeName>
</protein>
<reference key="1">
    <citation type="journal article" date="2009" name="J. Bacteriol.">
        <title>Genome sequence of Azotobacter vinelandii, an obligate aerobe specialized to support diverse anaerobic metabolic processes.</title>
        <authorList>
            <person name="Setubal J.C."/>
            <person name="Dos Santos P."/>
            <person name="Goldman B.S."/>
            <person name="Ertesvaag H."/>
            <person name="Espin G."/>
            <person name="Rubio L.M."/>
            <person name="Valla S."/>
            <person name="Almeida N.F."/>
            <person name="Balasubramanian D."/>
            <person name="Cromes L."/>
            <person name="Curatti L."/>
            <person name="Du Z."/>
            <person name="Godsy E."/>
            <person name="Goodner B."/>
            <person name="Hellner-Burris K."/>
            <person name="Hernandez J.A."/>
            <person name="Houmiel K."/>
            <person name="Imperial J."/>
            <person name="Kennedy C."/>
            <person name="Larson T.J."/>
            <person name="Latreille P."/>
            <person name="Ligon L.S."/>
            <person name="Lu J."/>
            <person name="Maerk M."/>
            <person name="Miller N.M."/>
            <person name="Norton S."/>
            <person name="O'Carroll I.P."/>
            <person name="Paulsen I."/>
            <person name="Raulfs E.C."/>
            <person name="Roemer R."/>
            <person name="Rosser J."/>
            <person name="Segura D."/>
            <person name="Slater S."/>
            <person name="Stricklin S.L."/>
            <person name="Studholme D.J."/>
            <person name="Sun J."/>
            <person name="Viana C.J."/>
            <person name="Wallin E."/>
            <person name="Wang B."/>
            <person name="Wheeler C."/>
            <person name="Zhu H."/>
            <person name="Dean D.R."/>
            <person name="Dixon R."/>
            <person name="Wood D."/>
        </authorList>
    </citation>
    <scope>NUCLEOTIDE SEQUENCE [LARGE SCALE GENOMIC DNA]</scope>
    <source>
        <strain>DJ / ATCC BAA-1303</strain>
    </source>
</reference>
<proteinExistence type="inferred from homology"/>
<feature type="chain" id="PRO_0000389936" description="NADH-quinone oxidoreductase subunit K">
    <location>
        <begin position="1"/>
        <end position="102"/>
    </location>
</feature>
<feature type="transmembrane region" description="Helical" evidence="1">
    <location>
        <begin position="6"/>
        <end position="26"/>
    </location>
</feature>
<feature type="transmembrane region" description="Helical" evidence="1">
    <location>
        <begin position="30"/>
        <end position="50"/>
    </location>
</feature>
<feature type="transmembrane region" description="Helical" evidence="1">
    <location>
        <begin position="62"/>
        <end position="82"/>
    </location>
</feature>